<accession>A0A0H2VKG8</accession>
<keyword id="KW-0004">4Fe-4S</keyword>
<keyword id="KW-1015">Disulfide bond</keyword>
<keyword id="KW-0408">Iron</keyword>
<keyword id="KW-0411">Iron-sulfur</keyword>
<keyword id="KW-0479">Metal-binding</keyword>
<keyword id="KW-0560">Oxidoreductase</keyword>
<keyword id="KW-0671">Queuosine biosynthesis</keyword>
<keyword id="KW-0676">Redox-active center</keyword>
<keyword id="KW-0819">tRNA processing</keyword>
<evidence type="ECO:0000255" key="1">
    <source>
        <dbReference type="HAMAP-Rule" id="MF_02089"/>
    </source>
</evidence>
<evidence type="ECO:0000269" key="2">
    <source>
    </source>
</evidence>
<evidence type="ECO:0000303" key="3">
    <source>
    </source>
</evidence>
<evidence type="ECO:0000305" key="4"/>
<evidence type="ECO:0000305" key="5">
    <source>
    </source>
</evidence>
<evidence type="ECO:0000312" key="6">
    <source>
        <dbReference type="EMBL" id="AAO05777.1"/>
    </source>
</evidence>
<gene>
    <name evidence="1 3" type="primary">queH</name>
    <name evidence="6" type="ordered locus">SE_2135</name>
</gene>
<sequence>MIEANQILAKMKNQKINYDKVLRKIISQWERDGERPKILLHSCCAPCSTYTLEFLTQYADIAIYFANPNIHPKSEYLRRAKVQEQFVNDFNNKTGASVKYIEAEYEPHKFMKMAKDKGLTEEPEGGLRCTACFEMRLEIVAKAALEHGYDYFGSAITLSPKKNAQLINELGMDVQNIYNVKYLPSDFKKNKGYERSIEMCNDYNIFRQCYCGCVFAAMKQGIDFKQINKDAQAFLQQF</sequence>
<feature type="chain" id="PRO_0000439904" description="Epoxyqueuosine reductase QueH">
    <location>
        <begin position="1"/>
        <end position="238"/>
    </location>
</feature>
<feature type="binding site" evidence="1">
    <location>
        <position position="43"/>
    </location>
    <ligand>
        <name>[4Fe-4S] cluster</name>
        <dbReference type="ChEBI" id="CHEBI:49883"/>
    </ligand>
</feature>
<feature type="binding site" evidence="1">
    <location>
        <position position="44"/>
    </location>
    <ligand>
        <name>[4Fe-4S] cluster</name>
        <dbReference type="ChEBI" id="CHEBI:49883"/>
    </ligand>
</feature>
<feature type="binding site" evidence="1">
    <location>
        <position position="129"/>
    </location>
    <ligand>
        <name>[4Fe-4S] cluster</name>
        <dbReference type="ChEBI" id="CHEBI:49883"/>
    </ligand>
</feature>
<feature type="binding site" evidence="1">
    <location>
        <position position="132"/>
    </location>
    <ligand>
        <name>[4Fe-4S] cluster</name>
        <dbReference type="ChEBI" id="CHEBI:49883"/>
    </ligand>
</feature>
<feature type="disulfide bond" description="Redox-active" evidence="1">
    <location>
        <begin position="211"/>
        <end position="213"/>
    </location>
</feature>
<protein>
    <recommendedName>
        <fullName evidence="1 3">Epoxyqueuosine reductase QueH</fullName>
        <ecNumber evidence="1 5">1.17.99.6</ecNumber>
    </recommendedName>
    <alternativeName>
        <fullName evidence="1 4">Queuosine biosynthesis protein QueH</fullName>
    </alternativeName>
</protein>
<organism>
    <name type="scientific">Staphylococcus epidermidis (strain ATCC 12228 / FDA PCI 1200)</name>
    <dbReference type="NCBI Taxonomy" id="176280"/>
    <lineage>
        <taxon>Bacteria</taxon>
        <taxon>Bacillati</taxon>
        <taxon>Bacillota</taxon>
        <taxon>Bacilli</taxon>
        <taxon>Bacillales</taxon>
        <taxon>Staphylococcaceae</taxon>
        <taxon>Staphylococcus</taxon>
    </lineage>
</organism>
<name>QUEH_STAES</name>
<proteinExistence type="evidence at protein level"/>
<dbReference type="EC" id="1.17.99.6" evidence="1 5"/>
<dbReference type="EMBL" id="AE015929">
    <property type="protein sequence ID" value="AAO05777.1"/>
    <property type="molecule type" value="Genomic_DNA"/>
</dbReference>
<dbReference type="RefSeq" id="NP_765690.1">
    <property type="nucleotide sequence ID" value="NC_004461.1"/>
</dbReference>
<dbReference type="RefSeq" id="WP_002485460.1">
    <property type="nucleotide sequence ID" value="NC_004461.1"/>
</dbReference>
<dbReference type="SMR" id="A0A0H2VKG8"/>
<dbReference type="KEGG" id="sep:SE_2135"/>
<dbReference type="PATRIC" id="fig|176280.10.peg.2086"/>
<dbReference type="eggNOG" id="COG1636">
    <property type="taxonomic scope" value="Bacteria"/>
</dbReference>
<dbReference type="HOGENOM" id="CLU_088177_1_0_9"/>
<dbReference type="OrthoDB" id="9801033at2"/>
<dbReference type="UniPathway" id="UPA00392"/>
<dbReference type="Proteomes" id="UP000001411">
    <property type="component" value="Chromosome"/>
</dbReference>
<dbReference type="GO" id="GO:0051539">
    <property type="term" value="F:4 iron, 4 sulfur cluster binding"/>
    <property type="evidence" value="ECO:0007669"/>
    <property type="project" value="UniProtKB-UniRule"/>
</dbReference>
<dbReference type="GO" id="GO:0052693">
    <property type="term" value="F:epoxyqueuosine reductase activity"/>
    <property type="evidence" value="ECO:0007669"/>
    <property type="project" value="UniProtKB-UniRule"/>
</dbReference>
<dbReference type="GO" id="GO:0046872">
    <property type="term" value="F:metal ion binding"/>
    <property type="evidence" value="ECO:0007669"/>
    <property type="project" value="UniProtKB-KW"/>
</dbReference>
<dbReference type="GO" id="GO:0008616">
    <property type="term" value="P:queuosine biosynthetic process"/>
    <property type="evidence" value="ECO:0007669"/>
    <property type="project" value="UniProtKB-UniRule"/>
</dbReference>
<dbReference type="GO" id="GO:0006400">
    <property type="term" value="P:tRNA modification"/>
    <property type="evidence" value="ECO:0007669"/>
    <property type="project" value="UniProtKB-UniRule"/>
</dbReference>
<dbReference type="HAMAP" id="MF_02089">
    <property type="entry name" value="QueH"/>
    <property type="match status" value="1"/>
</dbReference>
<dbReference type="InterPro" id="IPR003828">
    <property type="entry name" value="QueH"/>
</dbReference>
<dbReference type="PANTHER" id="PTHR36701">
    <property type="entry name" value="EPOXYQUEUOSINE REDUCTASE QUEH"/>
    <property type="match status" value="1"/>
</dbReference>
<dbReference type="PANTHER" id="PTHR36701:SF1">
    <property type="entry name" value="EPOXYQUEUOSINE REDUCTASE QUEH"/>
    <property type="match status" value="1"/>
</dbReference>
<dbReference type="Pfam" id="PF02677">
    <property type="entry name" value="QueH"/>
    <property type="match status" value="1"/>
</dbReference>
<comment type="function">
    <text evidence="1 2">Catalyzes the conversion of epoxyqueuosine (oQ) to queuosine (Q), which is a hypermodified base found in the wobble positions of tRNA(Asp), tRNA(Asn), tRNA(His) and tRNA(Tyr).</text>
</comment>
<comment type="catalytic activity">
    <reaction evidence="1 5">
        <text>epoxyqueuosine(34) in tRNA + AH2 = queuosine(34) in tRNA + A + H2O</text>
        <dbReference type="Rhea" id="RHEA:32159"/>
        <dbReference type="Rhea" id="RHEA-COMP:18571"/>
        <dbReference type="Rhea" id="RHEA-COMP:18582"/>
        <dbReference type="ChEBI" id="CHEBI:13193"/>
        <dbReference type="ChEBI" id="CHEBI:15377"/>
        <dbReference type="ChEBI" id="CHEBI:17499"/>
        <dbReference type="ChEBI" id="CHEBI:194431"/>
        <dbReference type="ChEBI" id="CHEBI:194443"/>
        <dbReference type="EC" id="1.17.99.6"/>
    </reaction>
</comment>
<comment type="pathway">
    <text evidence="1 5">tRNA modification; tRNA-queuosine biosynthesis.</text>
</comment>
<comment type="similarity">
    <text evidence="1 4">Belongs to the QueH family.</text>
</comment>
<reference key="1">
    <citation type="journal article" date="2003" name="Mol. Microbiol.">
        <title>Genome-based analysis of virulence genes in a non-biofilm-forming Staphylococcus epidermidis strain (ATCC 12228).</title>
        <authorList>
            <person name="Zhang Y.-Q."/>
            <person name="Ren S.-X."/>
            <person name="Li H.-L."/>
            <person name="Wang Y.-X."/>
            <person name="Fu G."/>
            <person name="Yang J."/>
            <person name="Qin Z.-Q."/>
            <person name="Miao Y.-G."/>
            <person name="Wang W.-Y."/>
            <person name="Chen R.-S."/>
            <person name="Shen Y."/>
            <person name="Chen Z."/>
            <person name="Yuan Z.-H."/>
            <person name="Zhao G.-P."/>
            <person name="Qu D."/>
            <person name="Danchin A."/>
            <person name="Wen Y.-M."/>
        </authorList>
    </citation>
    <scope>NUCLEOTIDE SEQUENCE [LARGE SCALE GENOMIC DNA]</scope>
    <source>
        <strain>ATCC 12228 / FDA PCI 1200</strain>
    </source>
</reference>
<reference key="2">
    <citation type="journal article" date="2017" name="ACS Chem. Biol.">
        <title>Identification of a novel epoxyqueuosine reductase family by comparative genomics.</title>
        <authorList>
            <person name="Zallot R."/>
            <person name="Ross R."/>
            <person name="Chen W.H."/>
            <person name="Bruner S.D."/>
            <person name="Limbach P.A."/>
            <person name="de Crecy-Lagard V."/>
        </authorList>
    </citation>
    <scope>FUNCTION</scope>
    <scope>CATALYTIC ACTIVITY</scope>
    <scope>PATHWAY</scope>
    <source>
        <strain>ATCC 12228 / FDA PCI 1200</strain>
    </source>
</reference>